<keyword id="KW-0028">Amino-acid biosynthesis</keyword>
<keyword id="KW-0963">Cytoplasm</keyword>
<keyword id="KW-0554">One-carbon metabolism</keyword>
<keyword id="KW-0663">Pyridoxal phosphate</keyword>
<keyword id="KW-1185">Reference proteome</keyword>
<keyword id="KW-0808">Transferase</keyword>
<feature type="chain" id="PRO_0000369896" description="Serine hydroxymethyltransferase">
    <location>
        <begin position="1"/>
        <end position="426"/>
    </location>
</feature>
<feature type="binding site" evidence="1">
    <location>
        <position position="122"/>
    </location>
    <ligand>
        <name>(6S)-5,6,7,8-tetrahydrofolate</name>
        <dbReference type="ChEBI" id="CHEBI:57453"/>
    </ligand>
</feature>
<feature type="binding site" evidence="1">
    <location>
        <begin position="126"/>
        <end position="128"/>
    </location>
    <ligand>
        <name>(6S)-5,6,7,8-tetrahydrofolate</name>
        <dbReference type="ChEBI" id="CHEBI:57453"/>
    </ligand>
</feature>
<feature type="site" description="Plays an important role in substrate specificity" evidence="1">
    <location>
        <position position="230"/>
    </location>
</feature>
<feature type="modified residue" description="N6-(pyridoxal phosphate)lysine" evidence="1">
    <location>
        <position position="231"/>
    </location>
</feature>
<comment type="function">
    <text evidence="1">Catalyzes the reversible interconversion of serine and glycine with tetrahydrofolate (THF) serving as the one-carbon carrier. This reaction serves as the major source of one-carbon groups required for the biosynthesis of purines, thymidylate, methionine, and other important biomolecules. Also exhibits THF-independent aldolase activity toward beta-hydroxyamino acids, producing glycine and aldehydes, via a retro-aldol mechanism.</text>
</comment>
<comment type="catalytic activity">
    <reaction evidence="1">
        <text>(6R)-5,10-methylene-5,6,7,8-tetrahydrofolate + glycine + H2O = (6S)-5,6,7,8-tetrahydrofolate + L-serine</text>
        <dbReference type="Rhea" id="RHEA:15481"/>
        <dbReference type="ChEBI" id="CHEBI:15377"/>
        <dbReference type="ChEBI" id="CHEBI:15636"/>
        <dbReference type="ChEBI" id="CHEBI:33384"/>
        <dbReference type="ChEBI" id="CHEBI:57305"/>
        <dbReference type="ChEBI" id="CHEBI:57453"/>
        <dbReference type="EC" id="2.1.2.1"/>
    </reaction>
</comment>
<comment type="cofactor">
    <cofactor evidence="1">
        <name>pyridoxal 5'-phosphate</name>
        <dbReference type="ChEBI" id="CHEBI:597326"/>
    </cofactor>
</comment>
<comment type="pathway">
    <text evidence="1">One-carbon metabolism; tetrahydrofolate interconversion.</text>
</comment>
<comment type="pathway">
    <text evidence="1">Amino-acid biosynthesis; glycine biosynthesis; glycine from L-serine: step 1/1.</text>
</comment>
<comment type="subunit">
    <text evidence="1">Homodimer.</text>
</comment>
<comment type="subcellular location">
    <subcellularLocation>
        <location evidence="1">Cytoplasm</location>
    </subcellularLocation>
</comment>
<comment type="similarity">
    <text evidence="1">Belongs to the SHMT family.</text>
</comment>
<evidence type="ECO:0000255" key="1">
    <source>
        <dbReference type="HAMAP-Rule" id="MF_00051"/>
    </source>
</evidence>
<sequence length="426" mass="46264">MSNRMSQSLNEEDPQIAEAIANEERRQHEGLELIASENFVSEAVLQAAGSVFTNKYAEGYPGKRYYGGCEYADVVENLARDRAKELFGAEHANVQPHSGSSANMEAYGAILQPGDTILGLNLAHGGHLTHGHPLNFSGKTYKIVPYGVTKETETIDYDELEKLALEHHPKVIVGGGSAYPRIFDFKRMREIADKAGALFMVDMAHFAGLVAGGAHPSPVPHAHVVTTTTHKTLRGPRAGMILSKQEFAAAIDKVTFPGMQGGPLVHIIAAKAVCFKEAMEPSFKDYANQVVANAKVLAQSLADQGFRIISGGTDTHLMLIDVFAAGMLGSEAEKALGEAGITVNKNAIPFDTNPPMKPSGVRIGTPALTTRGMKEPEMRQVGIWIAESLRHRTDPDFLGRVRRQVHELCDAYPLYPERRATRLATV</sequence>
<gene>
    <name evidence="1" type="primary">glyA</name>
    <name type="ordered locus">Acid345_1264</name>
</gene>
<organism>
    <name type="scientific">Koribacter versatilis (strain Ellin345)</name>
    <dbReference type="NCBI Taxonomy" id="204669"/>
    <lineage>
        <taxon>Bacteria</taxon>
        <taxon>Pseudomonadati</taxon>
        <taxon>Acidobacteriota</taxon>
        <taxon>Terriglobia</taxon>
        <taxon>Terriglobales</taxon>
        <taxon>Candidatus Korobacteraceae</taxon>
        <taxon>Candidatus Korobacter</taxon>
    </lineage>
</organism>
<protein>
    <recommendedName>
        <fullName evidence="1">Serine hydroxymethyltransferase</fullName>
        <shortName evidence="1">SHMT</shortName>
        <shortName evidence="1">Serine methylase</shortName>
        <ecNumber evidence="1">2.1.2.1</ecNumber>
    </recommendedName>
</protein>
<reference key="1">
    <citation type="journal article" date="2009" name="Appl. Environ. Microbiol.">
        <title>Three genomes from the phylum Acidobacteria provide insight into the lifestyles of these microorganisms in soils.</title>
        <authorList>
            <person name="Ward N.L."/>
            <person name="Challacombe J.F."/>
            <person name="Janssen P.H."/>
            <person name="Henrissat B."/>
            <person name="Coutinho P.M."/>
            <person name="Wu M."/>
            <person name="Xie G."/>
            <person name="Haft D.H."/>
            <person name="Sait M."/>
            <person name="Badger J."/>
            <person name="Barabote R.D."/>
            <person name="Bradley B."/>
            <person name="Brettin T.S."/>
            <person name="Brinkac L.M."/>
            <person name="Bruce D."/>
            <person name="Creasy T."/>
            <person name="Daugherty S.C."/>
            <person name="Davidsen T.M."/>
            <person name="DeBoy R.T."/>
            <person name="Detter J.C."/>
            <person name="Dodson R.J."/>
            <person name="Durkin A.S."/>
            <person name="Ganapathy A."/>
            <person name="Gwinn-Giglio M."/>
            <person name="Han C.S."/>
            <person name="Khouri H."/>
            <person name="Kiss H."/>
            <person name="Kothari S.P."/>
            <person name="Madupu R."/>
            <person name="Nelson K.E."/>
            <person name="Nelson W.C."/>
            <person name="Paulsen I."/>
            <person name="Penn K."/>
            <person name="Ren Q."/>
            <person name="Rosovitz M.J."/>
            <person name="Selengut J.D."/>
            <person name="Shrivastava S."/>
            <person name="Sullivan S.A."/>
            <person name="Tapia R."/>
            <person name="Thompson L.S."/>
            <person name="Watkins K.L."/>
            <person name="Yang Q."/>
            <person name="Yu C."/>
            <person name="Zafar N."/>
            <person name="Zhou L."/>
            <person name="Kuske C.R."/>
        </authorList>
    </citation>
    <scope>NUCLEOTIDE SEQUENCE [LARGE SCALE GENOMIC DNA]</scope>
    <source>
        <strain>Ellin345</strain>
    </source>
</reference>
<dbReference type="EC" id="2.1.2.1" evidence="1"/>
<dbReference type="EMBL" id="CP000360">
    <property type="protein sequence ID" value="ABF40266.1"/>
    <property type="molecule type" value="Genomic_DNA"/>
</dbReference>
<dbReference type="RefSeq" id="WP_011522068.1">
    <property type="nucleotide sequence ID" value="NC_008009.1"/>
</dbReference>
<dbReference type="SMR" id="Q1IS84"/>
<dbReference type="STRING" id="204669.Acid345_1264"/>
<dbReference type="EnsemblBacteria" id="ABF40266">
    <property type="protein sequence ID" value="ABF40266"/>
    <property type="gene ID" value="Acid345_1264"/>
</dbReference>
<dbReference type="KEGG" id="aba:Acid345_1264"/>
<dbReference type="eggNOG" id="COG0112">
    <property type="taxonomic scope" value="Bacteria"/>
</dbReference>
<dbReference type="HOGENOM" id="CLU_022477_2_1_0"/>
<dbReference type="OrthoDB" id="9803846at2"/>
<dbReference type="UniPathway" id="UPA00193"/>
<dbReference type="UniPathway" id="UPA00288">
    <property type="reaction ID" value="UER01023"/>
</dbReference>
<dbReference type="Proteomes" id="UP000002432">
    <property type="component" value="Chromosome"/>
</dbReference>
<dbReference type="GO" id="GO:0005829">
    <property type="term" value="C:cytosol"/>
    <property type="evidence" value="ECO:0007669"/>
    <property type="project" value="TreeGrafter"/>
</dbReference>
<dbReference type="GO" id="GO:0004372">
    <property type="term" value="F:glycine hydroxymethyltransferase activity"/>
    <property type="evidence" value="ECO:0007669"/>
    <property type="project" value="UniProtKB-UniRule"/>
</dbReference>
<dbReference type="GO" id="GO:0030170">
    <property type="term" value="F:pyridoxal phosphate binding"/>
    <property type="evidence" value="ECO:0007669"/>
    <property type="project" value="UniProtKB-UniRule"/>
</dbReference>
<dbReference type="GO" id="GO:0019264">
    <property type="term" value="P:glycine biosynthetic process from serine"/>
    <property type="evidence" value="ECO:0007669"/>
    <property type="project" value="UniProtKB-UniRule"/>
</dbReference>
<dbReference type="GO" id="GO:0035999">
    <property type="term" value="P:tetrahydrofolate interconversion"/>
    <property type="evidence" value="ECO:0007669"/>
    <property type="project" value="UniProtKB-UniRule"/>
</dbReference>
<dbReference type="CDD" id="cd00378">
    <property type="entry name" value="SHMT"/>
    <property type="match status" value="1"/>
</dbReference>
<dbReference type="FunFam" id="3.40.640.10:FF:000001">
    <property type="entry name" value="Serine hydroxymethyltransferase"/>
    <property type="match status" value="1"/>
</dbReference>
<dbReference type="Gene3D" id="3.90.1150.10">
    <property type="entry name" value="Aspartate Aminotransferase, domain 1"/>
    <property type="match status" value="1"/>
</dbReference>
<dbReference type="Gene3D" id="3.40.640.10">
    <property type="entry name" value="Type I PLP-dependent aspartate aminotransferase-like (Major domain)"/>
    <property type="match status" value="1"/>
</dbReference>
<dbReference type="HAMAP" id="MF_00051">
    <property type="entry name" value="SHMT"/>
    <property type="match status" value="1"/>
</dbReference>
<dbReference type="InterPro" id="IPR015424">
    <property type="entry name" value="PyrdxlP-dep_Trfase"/>
</dbReference>
<dbReference type="InterPro" id="IPR015421">
    <property type="entry name" value="PyrdxlP-dep_Trfase_major"/>
</dbReference>
<dbReference type="InterPro" id="IPR015422">
    <property type="entry name" value="PyrdxlP-dep_Trfase_small"/>
</dbReference>
<dbReference type="InterPro" id="IPR001085">
    <property type="entry name" value="Ser_HO-MeTrfase"/>
</dbReference>
<dbReference type="InterPro" id="IPR049943">
    <property type="entry name" value="Ser_HO-MeTrfase-like"/>
</dbReference>
<dbReference type="InterPro" id="IPR019798">
    <property type="entry name" value="Ser_HO-MeTrfase_PLP_BS"/>
</dbReference>
<dbReference type="InterPro" id="IPR039429">
    <property type="entry name" value="SHMT-like_dom"/>
</dbReference>
<dbReference type="NCBIfam" id="NF000586">
    <property type="entry name" value="PRK00011.1"/>
    <property type="match status" value="1"/>
</dbReference>
<dbReference type="PANTHER" id="PTHR11680">
    <property type="entry name" value="SERINE HYDROXYMETHYLTRANSFERASE"/>
    <property type="match status" value="1"/>
</dbReference>
<dbReference type="PANTHER" id="PTHR11680:SF35">
    <property type="entry name" value="SERINE HYDROXYMETHYLTRANSFERASE 1"/>
    <property type="match status" value="1"/>
</dbReference>
<dbReference type="Pfam" id="PF00464">
    <property type="entry name" value="SHMT"/>
    <property type="match status" value="1"/>
</dbReference>
<dbReference type="PIRSF" id="PIRSF000412">
    <property type="entry name" value="SHMT"/>
    <property type="match status" value="1"/>
</dbReference>
<dbReference type="SUPFAM" id="SSF53383">
    <property type="entry name" value="PLP-dependent transferases"/>
    <property type="match status" value="1"/>
</dbReference>
<dbReference type="PROSITE" id="PS00096">
    <property type="entry name" value="SHMT"/>
    <property type="match status" value="1"/>
</dbReference>
<proteinExistence type="inferred from homology"/>
<accession>Q1IS84</accession>
<name>GLYA_KORVE</name>